<organism>
    <name type="scientific">Stenotrophomonas maltophilia (strain K279a)</name>
    <dbReference type="NCBI Taxonomy" id="522373"/>
    <lineage>
        <taxon>Bacteria</taxon>
        <taxon>Pseudomonadati</taxon>
        <taxon>Pseudomonadota</taxon>
        <taxon>Gammaproteobacteria</taxon>
        <taxon>Lysobacterales</taxon>
        <taxon>Lysobacteraceae</taxon>
        <taxon>Stenotrophomonas</taxon>
        <taxon>Stenotrophomonas maltophilia group</taxon>
    </lineage>
</organism>
<reference key="1">
    <citation type="journal article" date="2008" name="Genome Biol.">
        <title>The complete genome, comparative and functional analysis of Stenotrophomonas maltophilia reveals an organism heavily shielded by drug resistance determinants.</title>
        <authorList>
            <person name="Crossman L.C."/>
            <person name="Gould V.C."/>
            <person name="Dow J.M."/>
            <person name="Vernikos G.S."/>
            <person name="Okazaki A."/>
            <person name="Sebaihia M."/>
            <person name="Saunders D."/>
            <person name="Arrowsmith C."/>
            <person name="Carver T."/>
            <person name="Peters N."/>
            <person name="Adlem E."/>
            <person name="Kerhornou A."/>
            <person name="Lord A."/>
            <person name="Murphy L."/>
            <person name="Seeger K."/>
            <person name="Squares R."/>
            <person name="Rutter S."/>
            <person name="Quail M.A."/>
            <person name="Rajandream M.A."/>
            <person name="Harris D."/>
            <person name="Churcher C."/>
            <person name="Bentley S.D."/>
            <person name="Parkhill J."/>
            <person name="Thomson N.R."/>
            <person name="Avison M.B."/>
        </authorList>
    </citation>
    <scope>NUCLEOTIDE SEQUENCE [LARGE SCALE GENOMIC DNA]</scope>
    <source>
        <strain>K279a</strain>
    </source>
</reference>
<name>ISPH_STRMK</name>
<feature type="chain" id="PRO_1000098980" description="4-hydroxy-3-methylbut-2-enyl diphosphate reductase">
    <location>
        <begin position="1"/>
        <end position="316"/>
    </location>
</feature>
<feature type="active site" description="Proton donor" evidence="1">
    <location>
        <position position="126"/>
    </location>
</feature>
<feature type="binding site" evidence="1">
    <location>
        <position position="12"/>
    </location>
    <ligand>
        <name>[4Fe-4S] cluster</name>
        <dbReference type="ChEBI" id="CHEBI:49883"/>
    </ligand>
</feature>
<feature type="binding site" evidence="1">
    <location>
        <position position="41"/>
    </location>
    <ligand>
        <name>(2E)-4-hydroxy-3-methylbut-2-enyl diphosphate</name>
        <dbReference type="ChEBI" id="CHEBI:128753"/>
    </ligand>
</feature>
<feature type="binding site" evidence="1">
    <location>
        <position position="41"/>
    </location>
    <ligand>
        <name>dimethylallyl diphosphate</name>
        <dbReference type="ChEBI" id="CHEBI:57623"/>
    </ligand>
</feature>
<feature type="binding site" evidence="1">
    <location>
        <position position="41"/>
    </location>
    <ligand>
        <name>isopentenyl diphosphate</name>
        <dbReference type="ChEBI" id="CHEBI:128769"/>
    </ligand>
</feature>
<feature type="binding site" evidence="1">
    <location>
        <position position="74"/>
    </location>
    <ligand>
        <name>(2E)-4-hydroxy-3-methylbut-2-enyl diphosphate</name>
        <dbReference type="ChEBI" id="CHEBI:128753"/>
    </ligand>
</feature>
<feature type="binding site" evidence="1">
    <location>
        <position position="74"/>
    </location>
    <ligand>
        <name>dimethylallyl diphosphate</name>
        <dbReference type="ChEBI" id="CHEBI:57623"/>
    </ligand>
</feature>
<feature type="binding site" evidence="1">
    <location>
        <position position="74"/>
    </location>
    <ligand>
        <name>isopentenyl diphosphate</name>
        <dbReference type="ChEBI" id="CHEBI:128769"/>
    </ligand>
</feature>
<feature type="binding site" evidence="1">
    <location>
        <position position="96"/>
    </location>
    <ligand>
        <name>[4Fe-4S] cluster</name>
        <dbReference type="ChEBI" id="CHEBI:49883"/>
    </ligand>
</feature>
<feature type="binding site" evidence="1">
    <location>
        <position position="124"/>
    </location>
    <ligand>
        <name>(2E)-4-hydroxy-3-methylbut-2-enyl diphosphate</name>
        <dbReference type="ChEBI" id="CHEBI:128753"/>
    </ligand>
</feature>
<feature type="binding site" evidence="1">
    <location>
        <position position="124"/>
    </location>
    <ligand>
        <name>dimethylallyl diphosphate</name>
        <dbReference type="ChEBI" id="CHEBI:57623"/>
    </ligand>
</feature>
<feature type="binding site" evidence="1">
    <location>
        <position position="124"/>
    </location>
    <ligand>
        <name>isopentenyl diphosphate</name>
        <dbReference type="ChEBI" id="CHEBI:128769"/>
    </ligand>
</feature>
<feature type="binding site" evidence="1">
    <location>
        <position position="169"/>
    </location>
    <ligand>
        <name>(2E)-4-hydroxy-3-methylbut-2-enyl diphosphate</name>
        <dbReference type="ChEBI" id="CHEBI:128753"/>
    </ligand>
</feature>
<feature type="binding site" evidence="1">
    <location>
        <position position="199"/>
    </location>
    <ligand>
        <name>[4Fe-4S] cluster</name>
        <dbReference type="ChEBI" id="CHEBI:49883"/>
    </ligand>
</feature>
<feature type="binding site" evidence="1">
    <location>
        <position position="227"/>
    </location>
    <ligand>
        <name>(2E)-4-hydroxy-3-methylbut-2-enyl diphosphate</name>
        <dbReference type="ChEBI" id="CHEBI:128753"/>
    </ligand>
</feature>
<feature type="binding site" evidence="1">
    <location>
        <position position="227"/>
    </location>
    <ligand>
        <name>dimethylallyl diphosphate</name>
        <dbReference type="ChEBI" id="CHEBI:57623"/>
    </ligand>
</feature>
<feature type="binding site" evidence="1">
    <location>
        <position position="227"/>
    </location>
    <ligand>
        <name>isopentenyl diphosphate</name>
        <dbReference type="ChEBI" id="CHEBI:128769"/>
    </ligand>
</feature>
<feature type="binding site" evidence="1">
    <location>
        <position position="228"/>
    </location>
    <ligand>
        <name>(2E)-4-hydroxy-3-methylbut-2-enyl diphosphate</name>
        <dbReference type="ChEBI" id="CHEBI:128753"/>
    </ligand>
</feature>
<feature type="binding site" evidence="1">
    <location>
        <position position="228"/>
    </location>
    <ligand>
        <name>dimethylallyl diphosphate</name>
        <dbReference type="ChEBI" id="CHEBI:57623"/>
    </ligand>
</feature>
<feature type="binding site" evidence="1">
    <location>
        <position position="228"/>
    </location>
    <ligand>
        <name>isopentenyl diphosphate</name>
        <dbReference type="ChEBI" id="CHEBI:128769"/>
    </ligand>
</feature>
<feature type="binding site" evidence="1">
    <location>
        <position position="229"/>
    </location>
    <ligand>
        <name>(2E)-4-hydroxy-3-methylbut-2-enyl diphosphate</name>
        <dbReference type="ChEBI" id="CHEBI:128753"/>
    </ligand>
</feature>
<feature type="binding site" evidence="1">
    <location>
        <position position="229"/>
    </location>
    <ligand>
        <name>dimethylallyl diphosphate</name>
        <dbReference type="ChEBI" id="CHEBI:57623"/>
    </ligand>
</feature>
<feature type="binding site" evidence="1">
    <location>
        <position position="229"/>
    </location>
    <ligand>
        <name>isopentenyl diphosphate</name>
        <dbReference type="ChEBI" id="CHEBI:128769"/>
    </ligand>
</feature>
<feature type="binding site" evidence="1">
    <location>
        <position position="271"/>
    </location>
    <ligand>
        <name>(2E)-4-hydroxy-3-methylbut-2-enyl diphosphate</name>
        <dbReference type="ChEBI" id="CHEBI:128753"/>
    </ligand>
</feature>
<feature type="binding site" evidence="1">
    <location>
        <position position="271"/>
    </location>
    <ligand>
        <name>dimethylallyl diphosphate</name>
        <dbReference type="ChEBI" id="CHEBI:57623"/>
    </ligand>
</feature>
<feature type="binding site" evidence="1">
    <location>
        <position position="271"/>
    </location>
    <ligand>
        <name>isopentenyl diphosphate</name>
        <dbReference type="ChEBI" id="CHEBI:128769"/>
    </ligand>
</feature>
<gene>
    <name evidence="1" type="primary">ispH</name>
    <name type="ordered locus">Smlt1342</name>
</gene>
<evidence type="ECO:0000255" key="1">
    <source>
        <dbReference type="HAMAP-Rule" id="MF_00191"/>
    </source>
</evidence>
<comment type="function">
    <text evidence="1">Catalyzes the conversion of 1-hydroxy-2-methyl-2-(E)-butenyl 4-diphosphate (HMBPP) into a mixture of isopentenyl diphosphate (IPP) and dimethylallyl diphosphate (DMAPP). Acts in the terminal step of the DOXP/MEP pathway for isoprenoid precursor biosynthesis.</text>
</comment>
<comment type="catalytic activity">
    <reaction evidence="1">
        <text>isopentenyl diphosphate + 2 oxidized [2Fe-2S]-[ferredoxin] + H2O = (2E)-4-hydroxy-3-methylbut-2-enyl diphosphate + 2 reduced [2Fe-2S]-[ferredoxin] + 2 H(+)</text>
        <dbReference type="Rhea" id="RHEA:24488"/>
        <dbReference type="Rhea" id="RHEA-COMP:10000"/>
        <dbReference type="Rhea" id="RHEA-COMP:10001"/>
        <dbReference type="ChEBI" id="CHEBI:15377"/>
        <dbReference type="ChEBI" id="CHEBI:15378"/>
        <dbReference type="ChEBI" id="CHEBI:33737"/>
        <dbReference type="ChEBI" id="CHEBI:33738"/>
        <dbReference type="ChEBI" id="CHEBI:128753"/>
        <dbReference type="ChEBI" id="CHEBI:128769"/>
        <dbReference type="EC" id="1.17.7.4"/>
    </reaction>
</comment>
<comment type="catalytic activity">
    <reaction evidence="1">
        <text>dimethylallyl diphosphate + 2 oxidized [2Fe-2S]-[ferredoxin] + H2O = (2E)-4-hydroxy-3-methylbut-2-enyl diphosphate + 2 reduced [2Fe-2S]-[ferredoxin] + 2 H(+)</text>
        <dbReference type="Rhea" id="RHEA:24825"/>
        <dbReference type="Rhea" id="RHEA-COMP:10000"/>
        <dbReference type="Rhea" id="RHEA-COMP:10001"/>
        <dbReference type="ChEBI" id="CHEBI:15377"/>
        <dbReference type="ChEBI" id="CHEBI:15378"/>
        <dbReference type="ChEBI" id="CHEBI:33737"/>
        <dbReference type="ChEBI" id="CHEBI:33738"/>
        <dbReference type="ChEBI" id="CHEBI:57623"/>
        <dbReference type="ChEBI" id="CHEBI:128753"/>
        <dbReference type="EC" id="1.17.7.4"/>
    </reaction>
</comment>
<comment type="cofactor">
    <cofactor evidence="1">
        <name>[4Fe-4S] cluster</name>
        <dbReference type="ChEBI" id="CHEBI:49883"/>
    </cofactor>
    <text evidence="1">Binds 1 [4Fe-4S] cluster per subunit.</text>
</comment>
<comment type="pathway">
    <text evidence="1">Isoprenoid biosynthesis; dimethylallyl diphosphate biosynthesis; dimethylallyl diphosphate from (2E)-4-hydroxy-3-methylbutenyl diphosphate: step 1/1.</text>
</comment>
<comment type="pathway">
    <text evidence="1">Isoprenoid biosynthesis; isopentenyl diphosphate biosynthesis via DXP pathway; isopentenyl diphosphate from 1-deoxy-D-xylulose 5-phosphate: step 6/6.</text>
</comment>
<comment type="similarity">
    <text evidence="1">Belongs to the IspH family.</text>
</comment>
<dbReference type="EC" id="1.17.7.4" evidence="1"/>
<dbReference type="EMBL" id="AM743169">
    <property type="protein sequence ID" value="CAQ44889.1"/>
    <property type="molecule type" value="Genomic_DNA"/>
</dbReference>
<dbReference type="RefSeq" id="WP_005408565.1">
    <property type="nucleotide sequence ID" value="NC_010943.1"/>
</dbReference>
<dbReference type="SMR" id="B2FU83"/>
<dbReference type="EnsemblBacteria" id="CAQ44889">
    <property type="protein sequence ID" value="CAQ44889"/>
    <property type="gene ID" value="Smlt1342"/>
</dbReference>
<dbReference type="GeneID" id="93832366"/>
<dbReference type="KEGG" id="sml:Smlt1342"/>
<dbReference type="eggNOG" id="COG0761">
    <property type="taxonomic scope" value="Bacteria"/>
</dbReference>
<dbReference type="HOGENOM" id="CLU_027486_1_0_6"/>
<dbReference type="UniPathway" id="UPA00056">
    <property type="reaction ID" value="UER00097"/>
</dbReference>
<dbReference type="UniPathway" id="UPA00059">
    <property type="reaction ID" value="UER00105"/>
</dbReference>
<dbReference type="Proteomes" id="UP000008840">
    <property type="component" value="Chromosome"/>
</dbReference>
<dbReference type="GO" id="GO:0051539">
    <property type="term" value="F:4 iron, 4 sulfur cluster binding"/>
    <property type="evidence" value="ECO:0007669"/>
    <property type="project" value="UniProtKB-UniRule"/>
</dbReference>
<dbReference type="GO" id="GO:0051745">
    <property type="term" value="F:4-hydroxy-3-methylbut-2-enyl diphosphate reductase activity"/>
    <property type="evidence" value="ECO:0007669"/>
    <property type="project" value="UniProtKB-UniRule"/>
</dbReference>
<dbReference type="GO" id="GO:0046872">
    <property type="term" value="F:metal ion binding"/>
    <property type="evidence" value="ECO:0007669"/>
    <property type="project" value="UniProtKB-KW"/>
</dbReference>
<dbReference type="GO" id="GO:0050992">
    <property type="term" value="P:dimethylallyl diphosphate biosynthetic process"/>
    <property type="evidence" value="ECO:0007669"/>
    <property type="project" value="UniProtKB-UniRule"/>
</dbReference>
<dbReference type="GO" id="GO:0019288">
    <property type="term" value="P:isopentenyl diphosphate biosynthetic process, methylerythritol 4-phosphate pathway"/>
    <property type="evidence" value="ECO:0007669"/>
    <property type="project" value="UniProtKB-UniRule"/>
</dbReference>
<dbReference type="GO" id="GO:0016114">
    <property type="term" value="P:terpenoid biosynthetic process"/>
    <property type="evidence" value="ECO:0007669"/>
    <property type="project" value="UniProtKB-UniRule"/>
</dbReference>
<dbReference type="CDD" id="cd13944">
    <property type="entry name" value="lytB_ispH"/>
    <property type="match status" value="1"/>
</dbReference>
<dbReference type="Gene3D" id="3.40.50.11270">
    <property type="match status" value="1"/>
</dbReference>
<dbReference type="Gene3D" id="3.40.1010.20">
    <property type="entry name" value="4-hydroxy-3-methylbut-2-enyl diphosphate reductase, catalytic domain"/>
    <property type="match status" value="2"/>
</dbReference>
<dbReference type="HAMAP" id="MF_00191">
    <property type="entry name" value="IspH"/>
    <property type="match status" value="1"/>
</dbReference>
<dbReference type="InterPro" id="IPR003451">
    <property type="entry name" value="LytB/IspH"/>
</dbReference>
<dbReference type="NCBIfam" id="TIGR00216">
    <property type="entry name" value="ispH_lytB"/>
    <property type="match status" value="1"/>
</dbReference>
<dbReference type="NCBIfam" id="NF002188">
    <property type="entry name" value="PRK01045.1-2"/>
    <property type="match status" value="1"/>
</dbReference>
<dbReference type="NCBIfam" id="NF002190">
    <property type="entry name" value="PRK01045.1-4"/>
    <property type="match status" value="1"/>
</dbReference>
<dbReference type="PANTHER" id="PTHR30426">
    <property type="entry name" value="4-HYDROXY-3-METHYLBUT-2-ENYL DIPHOSPHATE REDUCTASE"/>
    <property type="match status" value="1"/>
</dbReference>
<dbReference type="PANTHER" id="PTHR30426:SF0">
    <property type="entry name" value="4-HYDROXY-3-METHYLBUT-2-ENYL DIPHOSPHATE REDUCTASE"/>
    <property type="match status" value="1"/>
</dbReference>
<dbReference type="Pfam" id="PF02401">
    <property type="entry name" value="LYTB"/>
    <property type="match status" value="1"/>
</dbReference>
<sequence length="316" mass="34574">MDVLLANPRGFCAGVDRAIEIVKRAIETLGAPIYVRHEVVHNRFVVDDLKQRGAIFVEELDEVPDNNTVIFSAHGVSQAVRQEAERRGLKVFDATCPLVTKVHFEVARHCRAGRDVVLIGHAGHPEVEGTMGQWNREAGTGQIYLVEDVEQVATLQINQPENFAYTTQTTLSVDDTRGIIDALRERFPAMQGPKNDDICYATQNRQDAVRDLAKRCDLVLVVGSPNSSNSNRLSELARREGVESYLIDGAHEIDPAWVAGKQHIGVTAGASAPQVLVDGVLARLAELGATGVGELDGEPESMVFALPKELRLRLVD</sequence>
<proteinExistence type="inferred from homology"/>
<keyword id="KW-0004">4Fe-4S</keyword>
<keyword id="KW-0408">Iron</keyword>
<keyword id="KW-0411">Iron-sulfur</keyword>
<keyword id="KW-0414">Isoprene biosynthesis</keyword>
<keyword id="KW-0479">Metal-binding</keyword>
<keyword id="KW-0560">Oxidoreductase</keyword>
<keyword id="KW-1185">Reference proteome</keyword>
<accession>B2FU83</accession>
<protein>
    <recommendedName>
        <fullName evidence="1">4-hydroxy-3-methylbut-2-enyl diphosphate reductase</fullName>
        <shortName evidence="1">HMBPP reductase</shortName>
        <ecNumber evidence="1">1.17.7.4</ecNumber>
    </recommendedName>
</protein>